<comment type="catalytic activity">
    <reaction evidence="1">
        <text>tRNA(Leu) + L-leucine + ATP = L-leucyl-tRNA(Leu) + AMP + diphosphate</text>
        <dbReference type="Rhea" id="RHEA:11688"/>
        <dbReference type="Rhea" id="RHEA-COMP:9613"/>
        <dbReference type="Rhea" id="RHEA-COMP:9622"/>
        <dbReference type="ChEBI" id="CHEBI:30616"/>
        <dbReference type="ChEBI" id="CHEBI:33019"/>
        <dbReference type="ChEBI" id="CHEBI:57427"/>
        <dbReference type="ChEBI" id="CHEBI:78442"/>
        <dbReference type="ChEBI" id="CHEBI:78494"/>
        <dbReference type="ChEBI" id="CHEBI:456215"/>
        <dbReference type="EC" id="6.1.1.4"/>
    </reaction>
</comment>
<comment type="subcellular location">
    <subcellularLocation>
        <location evidence="1">Cytoplasm</location>
    </subcellularLocation>
</comment>
<comment type="similarity">
    <text evidence="1">Belongs to the class-I aminoacyl-tRNA synthetase family.</text>
</comment>
<keyword id="KW-0030">Aminoacyl-tRNA synthetase</keyword>
<keyword id="KW-0067">ATP-binding</keyword>
<keyword id="KW-0963">Cytoplasm</keyword>
<keyword id="KW-0436">Ligase</keyword>
<keyword id="KW-0547">Nucleotide-binding</keyword>
<keyword id="KW-0648">Protein biosynthesis</keyword>
<keyword id="KW-1185">Reference proteome</keyword>
<feature type="chain" id="PRO_1000009357" description="Leucine--tRNA ligase">
    <location>
        <begin position="1"/>
        <end position="809"/>
    </location>
</feature>
<feature type="short sequence motif" description="'HIGH' region">
    <location>
        <begin position="40"/>
        <end position="51"/>
    </location>
</feature>
<feature type="short sequence motif" description="'KMSKS' region">
    <location>
        <begin position="581"/>
        <end position="585"/>
    </location>
</feature>
<feature type="binding site" evidence="1">
    <location>
        <position position="584"/>
    </location>
    <ligand>
        <name>ATP</name>
        <dbReference type="ChEBI" id="CHEBI:30616"/>
    </ligand>
</feature>
<organism>
    <name type="scientific">Levilactobacillus brevis (strain ATCC 367 / BCRC 12310 / CIP 105137 / JCM 1170 / LMG 11437 / NCIMB 947 / NCTC 947)</name>
    <name type="common">Lactobacillus brevis</name>
    <dbReference type="NCBI Taxonomy" id="387344"/>
    <lineage>
        <taxon>Bacteria</taxon>
        <taxon>Bacillati</taxon>
        <taxon>Bacillota</taxon>
        <taxon>Bacilli</taxon>
        <taxon>Lactobacillales</taxon>
        <taxon>Lactobacillaceae</taxon>
        <taxon>Levilactobacillus</taxon>
    </lineage>
</organism>
<proteinExistence type="inferred from homology"/>
<protein>
    <recommendedName>
        <fullName evidence="1">Leucine--tRNA ligase</fullName>
        <ecNumber evidence="1">6.1.1.4</ecNumber>
    </recommendedName>
    <alternativeName>
        <fullName evidence="1">Leucyl-tRNA synthetase</fullName>
        <shortName evidence="1">LeuRS</shortName>
    </alternativeName>
</protein>
<gene>
    <name evidence="1" type="primary">leuS</name>
    <name type="ordered locus">LVIS_1062</name>
</gene>
<name>SYL_LEVBA</name>
<dbReference type="EC" id="6.1.1.4" evidence="1"/>
<dbReference type="EMBL" id="CP000416">
    <property type="protein sequence ID" value="ABJ64195.1"/>
    <property type="molecule type" value="Genomic_DNA"/>
</dbReference>
<dbReference type="RefSeq" id="WP_011667825.1">
    <property type="nucleotide sequence ID" value="NC_008497.1"/>
</dbReference>
<dbReference type="SMR" id="Q03RH7"/>
<dbReference type="STRING" id="387344.LVIS_1062"/>
<dbReference type="KEGG" id="lbr:LVIS_1062"/>
<dbReference type="PATRIC" id="fig|387344.15.peg.1038"/>
<dbReference type="eggNOG" id="COG0495">
    <property type="taxonomic scope" value="Bacteria"/>
</dbReference>
<dbReference type="HOGENOM" id="CLU_004427_0_0_9"/>
<dbReference type="Proteomes" id="UP000001652">
    <property type="component" value="Chromosome"/>
</dbReference>
<dbReference type="GO" id="GO:0005829">
    <property type="term" value="C:cytosol"/>
    <property type="evidence" value="ECO:0007669"/>
    <property type="project" value="TreeGrafter"/>
</dbReference>
<dbReference type="GO" id="GO:0002161">
    <property type="term" value="F:aminoacyl-tRNA deacylase activity"/>
    <property type="evidence" value="ECO:0007669"/>
    <property type="project" value="InterPro"/>
</dbReference>
<dbReference type="GO" id="GO:0005524">
    <property type="term" value="F:ATP binding"/>
    <property type="evidence" value="ECO:0007669"/>
    <property type="project" value="UniProtKB-UniRule"/>
</dbReference>
<dbReference type="GO" id="GO:0004823">
    <property type="term" value="F:leucine-tRNA ligase activity"/>
    <property type="evidence" value="ECO:0007669"/>
    <property type="project" value="UniProtKB-UniRule"/>
</dbReference>
<dbReference type="GO" id="GO:0006429">
    <property type="term" value="P:leucyl-tRNA aminoacylation"/>
    <property type="evidence" value="ECO:0007669"/>
    <property type="project" value="UniProtKB-UniRule"/>
</dbReference>
<dbReference type="CDD" id="cd07958">
    <property type="entry name" value="Anticodon_Ia_Leu_BEm"/>
    <property type="match status" value="1"/>
</dbReference>
<dbReference type="CDD" id="cd00812">
    <property type="entry name" value="LeuRS_core"/>
    <property type="match status" value="1"/>
</dbReference>
<dbReference type="FunFam" id="3.10.20.590:FF:000001">
    <property type="entry name" value="Leucine--tRNA ligase"/>
    <property type="match status" value="1"/>
</dbReference>
<dbReference type="FunFam" id="3.40.50.620:FF:000056">
    <property type="entry name" value="Leucine--tRNA ligase"/>
    <property type="match status" value="1"/>
</dbReference>
<dbReference type="FunFam" id="3.40.50.620:FF:000077">
    <property type="entry name" value="Leucine--tRNA ligase"/>
    <property type="match status" value="1"/>
</dbReference>
<dbReference type="FunFam" id="1.10.730.10:FF:000011">
    <property type="entry name" value="Leucine--tRNA ligase chloroplastic/mitochondrial"/>
    <property type="match status" value="1"/>
</dbReference>
<dbReference type="Gene3D" id="3.10.20.590">
    <property type="match status" value="1"/>
</dbReference>
<dbReference type="Gene3D" id="3.40.50.620">
    <property type="entry name" value="HUPs"/>
    <property type="match status" value="2"/>
</dbReference>
<dbReference type="Gene3D" id="1.10.730.10">
    <property type="entry name" value="Isoleucyl-tRNA Synthetase, Domain 1"/>
    <property type="match status" value="1"/>
</dbReference>
<dbReference type="Gene3D" id="3.90.740.10">
    <property type="entry name" value="Valyl/Leucyl/Isoleucyl-tRNA synthetase, editing domain"/>
    <property type="match status" value="1"/>
</dbReference>
<dbReference type="HAMAP" id="MF_00049_B">
    <property type="entry name" value="Leu_tRNA_synth_B"/>
    <property type="match status" value="1"/>
</dbReference>
<dbReference type="InterPro" id="IPR001412">
    <property type="entry name" value="aa-tRNA-synth_I_CS"/>
</dbReference>
<dbReference type="InterPro" id="IPR002300">
    <property type="entry name" value="aa-tRNA-synth_Ia"/>
</dbReference>
<dbReference type="InterPro" id="IPR002302">
    <property type="entry name" value="Leu-tRNA-ligase"/>
</dbReference>
<dbReference type="InterPro" id="IPR025709">
    <property type="entry name" value="Leu_tRNA-synth_edit"/>
</dbReference>
<dbReference type="InterPro" id="IPR013155">
    <property type="entry name" value="M/V/L/I-tRNA-synth_anticd-bd"/>
</dbReference>
<dbReference type="InterPro" id="IPR015413">
    <property type="entry name" value="Methionyl/Leucyl_tRNA_Synth"/>
</dbReference>
<dbReference type="InterPro" id="IPR014729">
    <property type="entry name" value="Rossmann-like_a/b/a_fold"/>
</dbReference>
<dbReference type="InterPro" id="IPR009080">
    <property type="entry name" value="tRNAsynth_Ia_anticodon-bd"/>
</dbReference>
<dbReference type="InterPro" id="IPR009008">
    <property type="entry name" value="Val/Leu/Ile-tRNA-synth_edit"/>
</dbReference>
<dbReference type="NCBIfam" id="TIGR00396">
    <property type="entry name" value="leuS_bact"/>
    <property type="match status" value="1"/>
</dbReference>
<dbReference type="PANTHER" id="PTHR43740:SF2">
    <property type="entry name" value="LEUCINE--TRNA LIGASE, MITOCHONDRIAL"/>
    <property type="match status" value="1"/>
</dbReference>
<dbReference type="PANTHER" id="PTHR43740">
    <property type="entry name" value="LEUCYL-TRNA SYNTHETASE"/>
    <property type="match status" value="1"/>
</dbReference>
<dbReference type="Pfam" id="PF08264">
    <property type="entry name" value="Anticodon_1"/>
    <property type="match status" value="1"/>
</dbReference>
<dbReference type="Pfam" id="PF00133">
    <property type="entry name" value="tRNA-synt_1"/>
    <property type="match status" value="1"/>
</dbReference>
<dbReference type="Pfam" id="PF13603">
    <property type="entry name" value="tRNA-synt_1_2"/>
    <property type="match status" value="1"/>
</dbReference>
<dbReference type="Pfam" id="PF09334">
    <property type="entry name" value="tRNA-synt_1g"/>
    <property type="match status" value="1"/>
</dbReference>
<dbReference type="PRINTS" id="PR00985">
    <property type="entry name" value="TRNASYNTHLEU"/>
</dbReference>
<dbReference type="SUPFAM" id="SSF47323">
    <property type="entry name" value="Anticodon-binding domain of a subclass of class I aminoacyl-tRNA synthetases"/>
    <property type="match status" value="1"/>
</dbReference>
<dbReference type="SUPFAM" id="SSF52374">
    <property type="entry name" value="Nucleotidylyl transferase"/>
    <property type="match status" value="1"/>
</dbReference>
<dbReference type="SUPFAM" id="SSF50677">
    <property type="entry name" value="ValRS/IleRS/LeuRS editing domain"/>
    <property type="match status" value="1"/>
</dbReference>
<dbReference type="PROSITE" id="PS00178">
    <property type="entry name" value="AA_TRNA_LIGASE_I"/>
    <property type="match status" value="1"/>
</dbReference>
<reference key="1">
    <citation type="journal article" date="2006" name="Proc. Natl. Acad. Sci. U.S.A.">
        <title>Comparative genomics of the lactic acid bacteria.</title>
        <authorList>
            <person name="Makarova K.S."/>
            <person name="Slesarev A."/>
            <person name="Wolf Y.I."/>
            <person name="Sorokin A."/>
            <person name="Mirkin B."/>
            <person name="Koonin E.V."/>
            <person name="Pavlov A."/>
            <person name="Pavlova N."/>
            <person name="Karamychev V."/>
            <person name="Polouchine N."/>
            <person name="Shakhova V."/>
            <person name="Grigoriev I."/>
            <person name="Lou Y."/>
            <person name="Rohksar D."/>
            <person name="Lucas S."/>
            <person name="Huang K."/>
            <person name="Goodstein D.M."/>
            <person name="Hawkins T."/>
            <person name="Plengvidhya V."/>
            <person name="Welker D."/>
            <person name="Hughes J."/>
            <person name="Goh Y."/>
            <person name="Benson A."/>
            <person name="Baldwin K."/>
            <person name="Lee J.-H."/>
            <person name="Diaz-Muniz I."/>
            <person name="Dosti B."/>
            <person name="Smeianov V."/>
            <person name="Wechter W."/>
            <person name="Barabote R."/>
            <person name="Lorca G."/>
            <person name="Altermann E."/>
            <person name="Barrangou R."/>
            <person name="Ganesan B."/>
            <person name="Xie Y."/>
            <person name="Rawsthorne H."/>
            <person name="Tamir D."/>
            <person name="Parker C."/>
            <person name="Breidt F."/>
            <person name="Broadbent J.R."/>
            <person name="Hutkins R."/>
            <person name="O'Sullivan D."/>
            <person name="Steele J."/>
            <person name="Unlu G."/>
            <person name="Saier M.H. Jr."/>
            <person name="Klaenhammer T."/>
            <person name="Richardson P."/>
            <person name="Kozyavkin S."/>
            <person name="Weimer B.C."/>
            <person name="Mills D.A."/>
        </authorList>
    </citation>
    <scope>NUCLEOTIDE SEQUENCE [LARGE SCALE GENOMIC DNA]</scope>
    <source>
        <strain>ATCC 367 / BCRC 12310 / CIP 105137 / JCM 1170 / LMG 11437 / NCIMB 947 / NCTC 947</strain>
    </source>
</reference>
<evidence type="ECO:0000255" key="1">
    <source>
        <dbReference type="HAMAP-Rule" id="MF_00049"/>
    </source>
</evidence>
<accession>Q03RH7</accession>
<sequence>MAYKHQIIERKWQHYWRANHTFETSDSQTKPKYYVMDMFPYPSGQGLHVGHPEGYTATDIMARLKRMQGFNVLHPMGWDAFGLPAEQYALKTGHNPKDFTAHNIKNFKRQIRSLGFSYDWSREINTTDESYYKWTQWIFEQLYKKGLAYEDKIMVNWAPDFMGGTVVANEEVIDGKTERGGYPVYRVPMRQWVLKITAYADRLIDDLDDLDWPDSIKEMQRNWIGRSEGASVFFPVDGQADTKIEVYTTRPDTLFGATYMVLAPEHAAVAKITTPEQADAVKAYQEAIESKSDLERTDLNKDKTGVFTGAYGINPLSGKKLPIWIGDYVLSSYGTGAIMAVPAHDERDHEFATKFNLPITQVIEGDADTDITEAAYTDDGKHINSDFMNGMDKQTAISAAIDWLTEHDAGHKQVNFRLRDWIFSRQRYWGEPIPVIHWENGETTLVPEDELPLKLPAAKQLEPSGTGESPLANLDDWVNVVDENGRKGKRETNTMPQWAGSSWYFLRYVDPTNDQAIADPEKLKYWMPVDLYIGGAEHAVLHLLYARFWHKFLYDLGVVPTKEPFQKLVNQGMILGTNHEKMSKSKGNVINPDEIVEKHGADTLRLYEMFMGPLEASKPWSTEGINGSRRWLDRVWRLLIDDNNRLRDRVTMINDGALDKIYNQTVKTVTEDLEAMRFNVAISQLMVFVNEAYKVDSLPMIYMEGFVKLISPIVPHIAEELWSLLGHDETIAYAKWPTYDAKQLVEDVVELVVQVNGKVRAHLKVAKDATKDAIEAAALADETVQVHTDGKTVRKVIVVPGKLVNIVAN</sequence>